<proteinExistence type="inferred from homology"/>
<organism>
    <name type="scientific">Desulforamulus reducens (strain ATCC BAA-1160 / DSM 100696 / MI-1)</name>
    <name type="common">Desulfotomaculum reducens</name>
    <dbReference type="NCBI Taxonomy" id="349161"/>
    <lineage>
        <taxon>Bacteria</taxon>
        <taxon>Bacillati</taxon>
        <taxon>Bacillota</taxon>
        <taxon>Clostridia</taxon>
        <taxon>Eubacteriales</taxon>
        <taxon>Peptococcaceae</taxon>
        <taxon>Desulforamulus</taxon>
    </lineage>
</organism>
<reference key="1">
    <citation type="submission" date="2007-03" db="EMBL/GenBank/DDBJ databases">
        <title>Complete sequence of Desulfotomaculum reducens MI-1.</title>
        <authorList>
            <consortium name="US DOE Joint Genome Institute"/>
            <person name="Copeland A."/>
            <person name="Lucas S."/>
            <person name="Lapidus A."/>
            <person name="Barry K."/>
            <person name="Detter J.C."/>
            <person name="Glavina del Rio T."/>
            <person name="Hammon N."/>
            <person name="Israni S."/>
            <person name="Dalin E."/>
            <person name="Tice H."/>
            <person name="Pitluck S."/>
            <person name="Sims D."/>
            <person name="Brettin T."/>
            <person name="Bruce D."/>
            <person name="Han C."/>
            <person name="Tapia R."/>
            <person name="Schmutz J."/>
            <person name="Larimer F."/>
            <person name="Land M."/>
            <person name="Hauser L."/>
            <person name="Kyrpides N."/>
            <person name="Kim E."/>
            <person name="Tebo B.M."/>
            <person name="Richardson P."/>
        </authorList>
    </citation>
    <scope>NUCLEOTIDE SEQUENCE [LARGE SCALE GENOMIC DNA]</scope>
    <source>
        <strain>ATCC BAA-1160 / DSM 100696 / MI-1</strain>
    </source>
</reference>
<name>AROE_DESRM</name>
<protein>
    <recommendedName>
        <fullName evidence="1">Shikimate dehydrogenase (NADP(+))</fullName>
        <shortName evidence="1">SDH</shortName>
        <ecNumber evidence="1">1.1.1.25</ecNumber>
    </recommendedName>
</protein>
<sequence length="291" mass="31947">MGHCRINGKTQVCGLFGFPVEHSFSPAMHNAAFQQLDLNWTYVPFRVHPDNLKQAVTGIFSLNMAGVNVTVPHKQRVMPFLDELEPAARIIGAVNTIVNNNGKLVGYNTDGKGFVRALTEEARFNPLGKSAILIGAGGAARAVAVQLALSGLRTIYITNRNQEKAEELARDILESTDTSASMIPWGNNLLGKRMVEVDLVVQATPLGMSPEVDQVPEFPFQMLTPQHLVCDLIYNPEQTCFLRRAKSRGSKTMNGLAMLLYQGVLAFELWTGFTAPVDVMRNVLHKQVAKG</sequence>
<evidence type="ECO:0000255" key="1">
    <source>
        <dbReference type="HAMAP-Rule" id="MF_00222"/>
    </source>
</evidence>
<keyword id="KW-0028">Amino-acid biosynthesis</keyword>
<keyword id="KW-0057">Aromatic amino acid biosynthesis</keyword>
<keyword id="KW-0521">NADP</keyword>
<keyword id="KW-0560">Oxidoreductase</keyword>
<keyword id="KW-1185">Reference proteome</keyword>
<gene>
    <name evidence="1" type="primary">aroE</name>
    <name type="ordered locus">Dred_1018</name>
</gene>
<dbReference type="EC" id="1.1.1.25" evidence="1"/>
<dbReference type="EMBL" id="CP000612">
    <property type="protein sequence ID" value="ABO49553.1"/>
    <property type="molecule type" value="Genomic_DNA"/>
</dbReference>
<dbReference type="RefSeq" id="WP_011877380.1">
    <property type="nucleotide sequence ID" value="NC_009253.1"/>
</dbReference>
<dbReference type="SMR" id="A4J3A0"/>
<dbReference type="STRING" id="349161.Dred_1018"/>
<dbReference type="KEGG" id="drm:Dred_1018"/>
<dbReference type="eggNOG" id="COG0169">
    <property type="taxonomic scope" value="Bacteria"/>
</dbReference>
<dbReference type="HOGENOM" id="CLU_044063_4_1_9"/>
<dbReference type="OrthoDB" id="9792692at2"/>
<dbReference type="UniPathway" id="UPA00053">
    <property type="reaction ID" value="UER00087"/>
</dbReference>
<dbReference type="Proteomes" id="UP000001556">
    <property type="component" value="Chromosome"/>
</dbReference>
<dbReference type="GO" id="GO:0050661">
    <property type="term" value="F:NADP binding"/>
    <property type="evidence" value="ECO:0007669"/>
    <property type="project" value="InterPro"/>
</dbReference>
<dbReference type="GO" id="GO:0004764">
    <property type="term" value="F:shikimate 3-dehydrogenase (NADP+) activity"/>
    <property type="evidence" value="ECO:0007669"/>
    <property type="project" value="UniProtKB-UniRule"/>
</dbReference>
<dbReference type="GO" id="GO:0008652">
    <property type="term" value="P:amino acid biosynthetic process"/>
    <property type="evidence" value="ECO:0007669"/>
    <property type="project" value="UniProtKB-KW"/>
</dbReference>
<dbReference type="GO" id="GO:0009073">
    <property type="term" value="P:aromatic amino acid family biosynthetic process"/>
    <property type="evidence" value="ECO:0007669"/>
    <property type="project" value="UniProtKB-KW"/>
</dbReference>
<dbReference type="GO" id="GO:0009423">
    <property type="term" value="P:chorismate biosynthetic process"/>
    <property type="evidence" value="ECO:0007669"/>
    <property type="project" value="UniProtKB-UniRule"/>
</dbReference>
<dbReference type="GO" id="GO:0019632">
    <property type="term" value="P:shikimate metabolic process"/>
    <property type="evidence" value="ECO:0007669"/>
    <property type="project" value="InterPro"/>
</dbReference>
<dbReference type="CDD" id="cd01065">
    <property type="entry name" value="NAD_bind_Shikimate_DH"/>
    <property type="match status" value="1"/>
</dbReference>
<dbReference type="FunFam" id="3.40.50.10860:FF:000004">
    <property type="entry name" value="Quinate/shikimate dehydrogenase"/>
    <property type="match status" value="1"/>
</dbReference>
<dbReference type="Gene3D" id="3.40.50.10860">
    <property type="entry name" value="Leucine Dehydrogenase, chain A, domain 1"/>
    <property type="match status" value="1"/>
</dbReference>
<dbReference type="Gene3D" id="3.40.50.720">
    <property type="entry name" value="NAD(P)-binding Rossmann-like Domain"/>
    <property type="match status" value="1"/>
</dbReference>
<dbReference type="HAMAP" id="MF_00222">
    <property type="entry name" value="Shikimate_DH_AroE"/>
    <property type="match status" value="1"/>
</dbReference>
<dbReference type="InterPro" id="IPR046346">
    <property type="entry name" value="Aminoacid_DH-like_N_sf"/>
</dbReference>
<dbReference type="InterPro" id="IPR036291">
    <property type="entry name" value="NAD(P)-bd_dom_sf"/>
</dbReference>
<dbReference type="InterPro" id="IPR041121">
    <property type="entry name" value="SDH_C"/>
</dbReference>
<dbReference type="InterPro" id="IPR011342">
    <property type="entry name" value="Shikimate_DH"/>
</dbReference>
<dbReference type="InterPro" id="IPR013708">
    <property type="entry name" value="Shikimate_DH-bd_N"/>
</dbReference>
<dbReference type="InterPro" id="IPR022893">
    <property type="entry name" value="Shikimate_DH_fam"/>
</dbReference>
<dbReference type="InterPro" id="IPR006151">
    <property type="entry name" value="Shikm_DH/Glu-tRNA_Rdtase"/>
</dbReference>
<dbReference type="NCBIfam" id="TIGR00507">
    <property type="entry name" value="aroE"/>
    <property type="match status" value="1"/>
</dbReference>
<dbReference type="NCBIfam" id="NF001314">
    <property type="entry name" value="PRK00258.2-2"/>
    <property type="match status" value="1"/>
</dbReference>
<dbReference type="NCBIfam" id="NF001319">
    <property type="entry name" value="PRK00258.3-3"/>
    <property type="match status" value="1"/>
</dbReference>
<dbReference type="PANTHER" id="PTHR21089:SF1">
    <property type="entry name" value="BIFUNCTIONAL 3-DEHYDROQUINATE DEHYDRATASE_SHIKIMATE DEHYDROGENASE, CHLOROPLASTIC"/>
    <property type="match status" value="1"/>
</dbReference>
<dbReference type="PANTHER" id="PTHR21089">
    <property type="entry name" value="SHIKIMATE DEHYDROGENASE"/>
    <property type="match status" value="1"/>
</dbReference>
<dbReference type="Pfam" id="PF18317">
    <property type="entry name" value="SDH_C"/>
    <property type="match status" value="1"/>
</dbReference>
<dbReference type="Pfam" id="PF01488">
    <property type="entry name" value="Shikimate_DH"/>
    <property type="match status" value="1"/>
</dbReference>
<dbReference type="Pfam" id="PF08501">
    <property type="entry name" value="Shikimate_dh_N"/>
    <property type="match status" value="1"/>
</dbReference>
<dbReference type="SUPFAM" id="SSF53223">
    <property type="entry name" value="Aminoacid dehydrogenase-like, N-terminal domain"/>
    <property type="match status" value="1"/>
</dbReference>
<dbReference type="SUPFAM" id="SSF51735">
    <property type="entry name" value="NAD(P)-binding Rossmann-fold domains"/>
    <property type="match status" value="1"/>
</dbReference>
<accession>A4J3A0</accession>
<comment type="function">
    <text evidence="1">Involved in the biosynthesis of the chorismate, which leads to the biosynthesis of aromatic amino acids. Catalyzes the reversible NADPH linked reduction of 3-dehydroshikimate (DHSA) to yield shikimate (SA).</text>
</comment>
<comment type="catalytic activity">
    <reaction evidence="1">
        <text>shikimate + NADP(+) = 3-dehydroshikimate + NADPH + H(+)</text>
        <dbReference type="Rhea" id="RHEA:17737"/>
        <dbReference type="ChEBI" id="CHEBI:15378"/>
        <dbReference type="ChEBI" id="CHEBI:16630"/>
        <dbReference type="ChEBI" id="CHEBI:36208"/>
        <dbReference type="ChEBI" id="CHEBI:57783"/>
        <dbReference type="ChEBI" id="CHEBI:58349"/>
        <dbReference type="EC" id="1.1.1.25"/>
    </reaction>
</comment>
<comment type="pathway">
    <text evidence="1">Metabolic intermediate biosynthesis; chorismate biosynthesis; chorismate from D-erythrose 4-phosphate and phosphoenolpyruvate: step 4/7.</text>
</comment>
<comment type="subunit">
    <text evidence="1">Homodimer.</text>
</comment>
<comment type="similarity">
    <text evidence="1">Belongs to the shikimate dehydrogenase family.</text>
</comment>
<feature type="chain" id="PRO_0000325117" description="Shikimate dehydrogenase (NADP(+))">
    <location>
        <begin position="1"/>
        <end position="291"/>
    </location>
</feature>
<feature type="active site" description="Proton acceptor" evidence="1">
    <location>
        <position position="74"/>
    </location>
</feature>
<feature type="binding site" evidence="1">
    <location>
        <begin position="23"/>
        <end position="25"/>
    </location>
    <ligand>
        <name>shikimate</name>
        <dbReference type="ChEBI" id="CHEBI:36208"/>
    </ligand>
</feature>
<feature type="binding site" evidence="1">
    <location>
        <position position="70"/>
    </location>
    <ligand>
        <name>shikimate</name>
        <dbReference type="ChEBI" id="CHEBI:36208"/>
    </ligand>
</feature>
<feature type="binding site" evidence="1">
    <location>
        <position position="95"/>
    </location>
    <ligand>
        <name>shikimate</name>
        <dbReference type="ChEBI" id="CHEBI:36208"/>
    </ligand>
</feature>
<feature type="binding site" evidence="1">
    <location>
        <position position="110"/>
    </location>
    <ligand>
        <name>shikimate</name>
        <dbReference type="ChEBI" id="CHEBI:36208"/>
    </ligand>
</feature>
<feature type="binding site" evidence="1">
    <location>
        <begin position="135"/>
        <end position="139"/>
    </location>
    <ligand>
        <name>NADP(+)</name>
        <dbReference type="ChEBI" id="CHEBI:58349"/>
    </ligand>
</feature>
<feature type="binding site" evidence="1">
    <location>
        <position position="232"/>
    </location>
    <ligand>
        <name>NADP(+)</name>
        <dbReference type="ChEBI" id="CHEBI:58349"/>
    </ligand>
</feature>
<feature type="binding site" evidence="1">
    <location>
        <position position="234"/>
    </location>
    <ligand>
        <name>shikimate</name>
        <dbReference type="ChEBI" id="CHEBI:36208"/>
    </ligand>
</feature>
<feature type="binding site" evidence="1">
    <location>
        <position position="255"/>
    </location>
    <ligand>
        <name>NADP(+)</name>
        <dbReference type="ChEBI" id="CHEBI:58349"/>
    </ligand>
</feature>